<proteinExistence type="inferred from homology"/>
<accession>P15397</accession>
<comment type="function">
    <text>Contributes to the root inducing activity.</text>
</comment>
<comment type="similarity">
    <text evidence="2">Belongs to the rolB/rolC family.</text>
</comment>
<comment type="sequence caution" evidence="2">
    <conflict type="erroneous initiation">
        <sequence resource="EMBL-CDS" id="CAA34077"/>
    </conflict>
</comment>
<feature type="chain" id="PRO_0000097403" description="Protein RolB(TR)">
    <location>
        <begin position="1"/>
        <end position="274"/>
    </location>
</feature>
<feature type="region of interest" description="Disordered" evidence="1">
    <location>
        <begin position="248"/>
        <end position="274"/>
    </location>
</feature>
<protein>
    <recommendedName>
        <fullName>Protein RolB(TR)</fullName>
    </recommendedName>
</protein>
<name>ROLT_RHIRH</name>
<evidence type="ECO:0000256" key="1">
    <source>
        <dbReference type="SAM" id="MobiDB-lite"/>
    </source>
</evidence>
<evidence type="ECO:0000305" key="2"/>
<reference key="1">
    <citation type="journal article" date="1990" name="Plant Mol. Biol.">
        <title>Identification of a putative rol B gene on the TR-DNA of the Agrobacterium rhizogenes A4 Ri plasmid.</title>
        <authorList>
            <person name="Bouchez D."/>
            <person name="Camilleri C."/>
        </authorList>
    </citation>
    <scope>NUCLEOTIDE SEQUENCE [GENOMIC DNA]</scope>
    <source>
        <strain>A4</strain>
    </source>
</reference>
<organism>
    <name type="scientific">Rhizobium rhizogenes</name>
    <name type="common">Agrobacterium rhizogenes</name>
    <dbReference type="NCBI Taxonomy" id="359"/>
    <lineage>
        <taxon>Bacteria</taxon>
        <taxon>Pseudomonadati</taxon>
        <taxon>Pseudomonadota</taxon>
        <taxon>Alphaproteobacteria</taxon>
        <taxon>Hyphomicrobiales</taxon>
        <taxon>Rhizobiaceae</taxon>
        <taxon>Rhizobium/Agrobacterium group</taxon>
        <taxon>Rhizobium</taxon>
    </lineage>
</organism>
<keyword id="KW-0614">Plasmid</keyword>
<geneLocation type="plasmid">
    <name>pRiA4b</name>
</geneLocation>
<sequence length="274" mass="31253">MLHGPKKHSHLSNTMGSRLLIRPYFPPRNLCHSQDATTLLRELQDAFDSYNQSFRGEIMRFQKAFAERVLNMVEARYPVNQLKINAEILTRKVCYHSPAHDPLDLALERQQYLFIYVSCEKIQELLFNRRFLVGTEAAVATSIQPYRSELSRGEMARVHNLAWRRRQTKESDMDCFVAIFSSTLFVSWYEARAVDIYGDEVLCPFLIRQATGDRDYDVVAYGFTKFAENATSRRLPARASSFLDLKLGPPVSATDDEAADGEPTLGPGETRTSA</sequence>
<dbReference type="EMBL" id="X15952">
    <property type="protein sequence ID" value="CAA34076.1"/>
    <property type="molecule type" value="Genomic_DNA"/>
</dbReference>
<dbReference type="EMBL" id="X15952">
    <property type="protein sequence ID" value="CAA34077.1"/>
    <property type="status" value="ALT_INIT"/>
    <property type="molecule type" value="Genomic_DNA"/>
</dbReference>
<dbReference type="PIR" id="S11872">
    <property type="entry name" value="S11872"/>
</dbReference>
<dbReference type="InterPro" id="IPR006064">
    <property type="entry name" value="Glycosidase"/>
</dbReference>
<dbReference type="Pfam" id="PF02027">
    <property type="entry name" value="RolB_RolC"/>
    <property type="match status" value="1"/>
</dbReference>
<gene>
    <name type="primary">rolB</name>
</gene>